<evidence type="ECO:0000255" key="1">
    <source>
        <dbReference type="HAMAP-Rule" id="MF_01073"/>
    </source>
</evidence>
<reference key="1">
    <citation type="journal article" date="2007" name="Genome Biol.">
        <title>Characterization and modeling of the Haemophilus influenzae core and supragenomes based on the complete genomic sequences of Rd and 12 clinical nontypeable strains.</title>
        <authorList>
            <person name="Hogg J.S."/>
            <person name="Hu F.Z."/>
            <person name="Janto B."/>
            <person name="Boissy R."/>
            <person name="Hayes J."/>
            <person name="Keefe R."/>
            <person name="Post J.C."/>
            <person name="Ehrlich G.D."/>
        </authorList>
    </citation>
    <scope>NUCLEOTIDE SEQUENCE [LARGE SCALE GENOMIC DNA]</scope>
    <source>
        <strain>PittGG</strain>
    </source>
</reference>
<organism>
    <name type="scientific">Haemophilus influenzae (strain PittGG)</name>
    <dbReference type="NCBI Taxonomy" id="374931"/>
    <lineage>
        <taxon>Bacteria</taxon>
        <taxon>Pseudomonadati</taxon>
        <taxon>Pseudomonadota</taxon>
        <taxon>Gammaproteobacteria</taxon>
        <taxon>Pasteurellales</taxon>
        <taxon>Pasteurellaceae</taxon>
        <taxon>Haemophilus</taxon>
    </lineage>
</organism>
<comment type="function">
    <text evidence="1">Required for spatial organization of the terminus region of the chromosome (Ter macrodomain) during the cell cycle. Prevents early segregation of duplicated Ter macrodomains during cell division. Binds specifically to matS, which is a 13 bp signature motif repeated within the Ter macrodomain.</text>
</comment>
<comment type="subunit">
    <text evidence="1">Homodimer.</text>
</comment>
<comment type="subcellular location">
    <subcellularLocation>
        <location evidence="1">Cytoplasm</location>
    </subcellularLocation>
</comment>
<comment type="similarity">
    <text evidence="1">Belongs to the MatP family.</text>
</comment>
<keyword id="KW-0131">Cell cycle</keyword>
<keyword id="KW-0132">Cell division</keyword>
<keyword id="KW-0963">Cytoplasm</keyword>
<keyword id="KW-0238">DNA-binding</keyword>
<sequence length="148" mass="17955">MKYQKLENQEANWKWIYLIRKHREGENITRYEERSLQEAKAQELLESQNYPSQIEEWIKNHLSPALPIKLDQAIRARRKRFFNGEKQHTKKKSIDLEYAVWLRLSKYSRKMKMTLSETITYMIDERESKAQFENQMAAMKTSLKNLLK</sequence>
<name>MATP_HAEIG</name>
<dbReference type="EMBL" id="CP000672">
    <property type="protein sequence ID" value="ABQ99344.1"/>
    <property type="molecule type" value="Genomic_DNA"/>
</dbReference>
<dbReference type="SMR" id="A5UEY9"/>
<dbReference type="KEGG" id="hiq:CGSHiGG_01275"/>
<dbReference type="HOGENOM" id="CLU_142157_0_0_6"/>
<dbReference type="Proteomes" id="UP000001990">
    <property type="component" value="Chromosome"/>
</dbReference>
<dbReference type="GO" id="GO:0005737">
    <property type="term" value="C:cytoplasm"/>
    <property type="evidence" value="ECO:0007669"/>
    <property type="project" value="UniProtKB-SubCell"/>
</dbReference>
<dbReference type="GO" id="GO:0043565">
    <property type="term" value="F:sequence-specific DNA binding"/>
    <property type="evidence" value="ECO:0007669"/>
    <property type="project" value="UniProtKB-UniRule"/>
</dbReference>
<dbReference type="GO" id="GO:0051301">
    <property type="term" value="P:cell division"/>
    <property type="evidence" value="ECO:0007669"/>
    <property type="project" value="UniProtKB-UniRule"/>
</dbReference>
<dbReference type="GO" id="GO:0006355">
    <property type="term" value="P:regulation of DNA-templated transcription"/>
    <property type="evidence" value="ECO:0007669"/>
    <property type="project" value="InterPro"/>
</dbReference>
<dbReference type="Gene3D" id="1.20.1270.380">
    <property type="entry name" value="MatP, N-terminal domain"/>
    <property type="match status" value="1"/>
</dbReference>
<dbReference type="Gene3D" id="1.10.1220.10">
    <property type="entry name" value="Met repressor-like"/>
    <property type="match status" value="1"/>
</dbReference>
<dbReference type="HAMAP" id="MF_01073">
    <property type="entry name" value="MatP"/>
    <property type="match status" value="1"/>
</dbReference>
<dbReference type="InterPro" id="IPR013321">
    <property type="entry name" value="Arc_rbn_hlx_hlx"/>
</dbReference>
<dbReference type="InterPro" id="IPR009390">
    <property type="entry name" value="MatP"/>
</dbReference>
<dbReference type="InterPro" id="IPR035375">
    <property type="entry name" value="MatP_C"/>
</dbReference>
<dbReference type="InterPro" id="IPR035087">
    <property type="entry name" value="MatP_N"/>
</dbReference>
<dbReference type="InterPro" id="IPR038339">
    <property type="entry name" value="MatP_N_sf"/>
</dbReference>
<dbReference type="NCBIfam" id="NF003471">
    <property type="entry name" value="PRK05097.1"/>
    <property type="match status" value="1"/>
</dbReference>
<dbReference type="Pfam" id="PF06303">
    <property type="entry name" value="MatP"/>
    <property type="match status" value="1"/>
</dbReference>
<dbReference type="Pfam" id="PF17414">
    <property type="entry name" value="MatP_C"/>
    <property type="match status" value="1"/>
</dbReference>
<gene>
    <name evidence="1" type="primary">matP</name>
    <name type="ordered locus">CGSHiGG_01275</name>
</gene>
<feature type="chain" id="PRO_1000064632" description="Macrodomain Ter protein">
    <location>
        <begin position="1"/>
        <end position="148"/>
    </location>
</feature>
<accession>A5UEY9</accession>
<protein>
    <recommendedName>
        <fullName evidence="1">Macrodomain Ter protein</fullName>
    </recommendedName>
</protein>
<proteinExistence type="inferred from homology"/>